<evidence type="ECO:0000250" key="1">
    <source>
        <dbReference type="UniProtKB" id="Q6DCA0"/>
    </source>
</evidence>
<evidence type="ECO:0000255" key="2">
    <source>
        <dbReference type="PROSITE-ProRule" id="PRU00467"/>
    </source>
</evidence>
<evidence type="ECO:0000256" key="3">
    <source>
        <dbReference type="SAM" id="MobiDB-lite"/>
    </source>
</evidence>
<gene>
    <name type="primary">Ammecr1l</name>
</gene>
<keyword id="KW-0597">Phosphoprotein</keyword>
<keyword id="KW-1185">Reference proteome</keyword>
<proteinExistence type="evidence at protein level"/>
<organism>
    <name type="scientific">Mus musculus</name>
    <name type="common">Mouse</name>
    <dbReference type="NCBI Taxonomy" id="10090"/>
    <lineage>
        <taxon>Eukaryota</taxon>
        <taxon>Metazoa</taxon>
        <taxon>Chordata</taxon>
        <taxon>Craniata</taxon>
        <taxon>Vertebrata</taxon>
        <taxon>Euteleostomi</taxon>
        <taxon>Mammalia</taxon>
        <taxon>Eutheria</taxon>
        <taxon>Euarchontoglires</taxon>
        <taxon>Glires</taxon>
        <taxon>Rodentia</taxon>
        <taxon>Myomorpha</taxon>
        <taxon>Muroidea</taxon>
        <taxon>Muridae</taxon>
        <taxon>Murinae</taxon>
        <taxon>Mus</taxon>
        <taxon>Mus</taxon>
    </lineage>
</organism>
<name>AMERL_MOUSE</name>
<accession>Q8JZZ6</accession>
<dbReference type="EMBL" id="BC034661">
    <property type="protein sequence ID" value="AAH34661.1"/>
    <property type="molecule type" value="mRNA"/>
</dbReference>
<dbReference type="EMBL" id="BC056948">
    <property type="protein sequence ID" value="AAH56948.1"/>
    <property type="molecule type" value="mRNA"/>
</dbReference>
<dbReference type="CCDS" id="CCDS37753.1"/>
<dbReference type="RefSeq" id="NP_705735.1">
    <property type="nucleotide sequence ID" value="NM_153515.4"/>
</dbReference>
<dbReference type="RefSeq" id="XP_006525906.1">
    <property type="nucleotide sequence ID" value="XM_006525843.5"/>
</dbReference>
<dbReference type="SMR" id="Q8JZZ6"/>
<dbReference type="FunCoup" id="Q8JZZ6">
    <property type="interactions" value="3337"/>
</dbReference>
<dbReference type="STRING" id="10090.ENSMUSP00000111475"/>
<dbReference type="GlyGen" id="Q8JZZ6">
    <property type="glycosylation" value="2 sites, 1 N-linked glycan (1 site), 1 O-linked glycan (1 site)"/>
</dbReference>
<dbReference type="iPTMnet" id="Q8JZZ6"/>
<dbReference type="PhosphoSitePlus" id="Q8JZZ6"/>
<dbReference type="PaxDb" id="10090-ENSMUSP00000111475"/>
<dbReference type="ProteomicsDB" id="296026"/>
<dbReference type="Pumba" id="Q8JZZ6"/>
<dbReference type="Antibodypedia" id="56027">
    <property type="antibodies" value="14 antibodies from 7 providers"/>
</dbReference>
<dbReference type="Ensembl" id="ENSMUST00000115808.4">
    <property type="protein sequence ID" value="ENSMUSP00000111475.3"/>
    <property type="gene ID" value="ENSMUSG00000041915.10"/>
</dbReference>
<dbReference type="Ensembl" id="ENSMUST00000234413.2">
    <property type="protein sequence ID" value="ENSMUSP00000156982.2"/>
    <property type="gene ID" value="ENSMUSG00000041915.10"/>
</dbReference>
<dbReference type="GeneID" id="225339"/>
<dbReference type="KEGG" id="mmu:225339"/>
<dbReference type="UCSC" id="uc008eif.2">
    <property type="organism name" value="mouse"/>
</dbReference>
<dbReference type="AGR" id="MGI:2442711"/>
<dbReference type="CTD" id="83607"/>
<dbReference type="MGI" id="MGI:2442711">
    <property type="gene designation" value="Ammecr1l"/>
</dbReference>
<dbReference type="VEuPathDB" id="HostDB:ENSMUSG00000041915"/>
<dbReference type="eggNOG" id="KOG3274">
    <property type="taxonomic scope" value="Eukaryota"/>
</dbReference>
<dbReference type="GeneTree" id="ENSGT00390000010397"/>
<dbReference type="HOGENOM" id="CLU_052828_0_0_1"/>
<dbReference type="InParanoid" id="Q8JZZ6"/>
<dbReference type="OMA" id="GTHTHGN"/>
<dbReference type="OrthoDB" id="24630at2759"/>
<dbReference type="PhylomeDB" id="Q8JZZ6"/>
<dbReference type="TreeFam" id="TF314680"/>
<dbReference type="BioGRID-ORCS" id="225339">
    <property type="hits" value="4 hits in 80 CRISPR screens"/>
</dbReference>
<dbReference type="ChiTaRS" id="Ammecr1l">
    <property type="organism name" value="mouse"/>
</dbReference>
<dbReference type="PRO" id="PR:Q8JZZ6"/>
<dbReference type="Proteomes" id="UP000000589">
    <property type="component" value="Chromosome 18"/>
</dbReference>
<dbReference type="RNAct" id="Q8JZZ6">
    <property type="molecule type" value="protein"/>
</dbReference>
<dbReference type="Bgee" id="ENSMUSG00000041915">
    <property type="expression patterns" value="Expressed in rostral migratory stream and 256 other cell types or tissues"/>
</dbReference>
<dbReference type="ExpressionAtlas" id="Q8JZZ6">
    <property type="expression patterns" value="baseline and differential"/>
</dbReference>
<dbReference type="FunFam" id="3.30.700.20:FF:000001">
    <property type="entry name" value="AMME syndrome candidate gene 1"/>
    <property type="match status" value="1"/>
</dbReference>
<dbReference type="Gene3D" id="3.30.700.20">
    <property type="entry name" value="Hypothetical protein ph0010, domain 1"/>
    <property type="match status" value="1"/>
</dbReference>
<dbReference type="InterPro" id="IPR023473">
    <property type="entry name" value="AMMECR1"/>
</dbReference>
<dbReference type="InterPro" id="IPR036071">
    <property type="entry name" value="AMMECR1_dom_sf"/>
</dbReference>
<dbReference type="InterPro" id="IPR002733">
    <property type="entry name" value="AMMECR1_domain"/>
</dbReference>
<dbReference type="InterPro" id="IPR027485">
    <property type="entry name" value="AMMECR1_N"/>
</dbReference>
<dbReference type="NCBIfam" id="TIGR00296">
    <property type="entry name" value="TIGR00296 family protein"/>
    <property type="match status" value="1"/>
</dbReference>
<dbReference type="PANTHER" id="PTHR13016">
    <property type="entry name" value="AMMECR1 HOMOLOG"/>
    <property type="match status" value="1"/>
</dbReference>
<dbReference type="PANTHER" id="PTHR13016:SF1">
    <property type="entry name" value="AMMECR1-LIKE PROTEIN"/>
    <property type="match status" value="1"/>
</dbReference>
<dbReference type="Pfam" id="PF01871">
    <property type="entry name" value="AMMECR1"/>
    <property type="match status" value="1"/>
</dbReference>
<dbReference type="SUPFAM" id="SSF143447">
    <property type="entry name" value="AMMECR1-like"/>
    <property type="match status" value="1"/>
</dbReference>
<dbReference type="PROSITE" id="PS51112">
    <property type="entry name" value="AMMECR1"/>
    <property type="match status" value="1"/>
</dbReference>
<sequence>MGKRRCVPPLEPKLAAGCCGVKKPKLSGSGTHSHGNQSTTVPGSSSGPLQNHQHVDNSSGRENVSDLTLGPGNSPITRMNTASGALSPLPRPNGTANSTKNLVVTAEMCCYCFDVLYCHLYGFPQPRLPRFTNDPYPLFVTWKTGRDKRLRGCIGTFSAMNLHSGLREYTLTSALKDSRFPPLTREELPKLFCSVSLLTNFEDASDYLDWEVGVHGIRIEFINEKGIKRTATYLPEVAKEQDWDQIQTIDSLLRKGGFKAPITSEFRKSIKLTRYRSEKVTISYAEYIASRQHCFQNGTLHAPPLYNHYS</sequence>
<reference key="1">
    <citation type="journal article" date="2004" name="Genome Res.">
        <title>The status, quality, and expansion of the NIH full-length cDNA project: the Mammalian Gene Collection (MGC).</title>
        <authorList>
            <consortium name="The MGC Project Team"/>
        </authorList>
    </citation>
    <scope>NUCLEOTIDE SEQUENCE [LARGE SCALE MRNA]</scope>
    <source>
        <strain>C57BL/6J</strain>
        <strain>FVB/N</strain>
        <tissue>Brain</tissue>
        <tissue>Liver</tissue>
    </source>
</reference>
<reference key="2">
    <citation type="journal article" date="2010" name="Cell">
        <title>A tissue-specific atlas of mouse protein phosphorylation and expression.</title>
        <authorList>
            <person name="Huttlin E.L."/>
            <person name="Jedrychowski M.P."/>
            <person name="Elias J.E."/>
            <person name="Goswami T."/>
            <person name="Rad R."/>
            <person name="Beausoleil S.A."/>
            <person name="Villen J."/>
            <person name="Haas W."/>
            <person name="Sowa M.E."/>
            <person name="Gygi S.P."/>
        </authorList>
    </citation>
    <scope>IDENTIFICATION BY MASS SPECTROMETRY [LARGE SCALE ANALYSIS]</scope>
    <source>
        <tissue>Kidney</tissue>
    </source>
</reference>
<protein>
    <recommendedName>
        <fullName>AMMECR1-like protein</fullName>
    </recommendedName>
</protein>
<feature type="chain" id="PRO_0000278480" description="AMMECR1-like protein">
    <location>
        <begin position="1"/>
        <end position="310"/>
    </location>
</feature>
<feature type="domain" description="AMMECR1" evidence="2">
    <location>
        <begin position="97"/>
        <end position="291"/>
    </location>
</feature>
<feature type="region of interest" description="Disordered" evidence="3">
    <location>
        <begin position="26"/>
        <end position="92"/>
    </location>
</feature>
<feature type="compositionally biased region" description="Polar residues" evidence="3">
    <location>
        <begin position="28"/>
        <end position="66"/>
    </location>
</feature>
<feature type="compositionally biased region" description="Polar residues" evidence="3">
    <location>
        <begin position="74"/>
        <end position="84"/>
    </location>
</feature>
<feature type="modified residue" description="Phosphoserine" evidence="1">
    <location>
        <position position="74"/>
    </location>
</feature>